<proteinExistence type="inferred from homology"/>
<gene>
    <name evidence="1" type="primary">ribA</name>
    <name type="ordered locus">ECH74115_1911</name>
</gene>
<keyword id="KW-0342">GTP-binding</keyword>
<keyword id="KW-0378">Hydrolase</keyword>
<keyword id="KW-0479">Metal-binding</keyword>
<keyword id="KW-0547">Nucleotide-binding</keyword>
<keyword id="KW-0686">Riboflavin biosynthesis</keyword>
<keyword id="KW-0862">Zinc</keyword>
<name>RIBA_ECO5E</name>
<feature type="chain" id="PRO_1000098264" description="GTP cyclohydrolase-2">
    <location>
        <begin position="1"/>
        <end position="196"/>
    </location>
</feature>
<feature type="active site" description="Proton acceptor" evidence="1">
    <location>
        <position position="126"/>
    </location>
</feature>
<feature type="active site" description="Nucleophile" evidence="1">
    <location>
        <position position="128"/>
    </location>
</feature>
<feature type="binding site" evidence="1">
    <location>
        <begin position="49"/>
        <end position="53"/>
    </location>
    <ligand>
        <name>GTP</name>
        <dbReference type="ChEBI" id="CHEBI:37565"/>
    </ligand>
</feature>
<feature type="binding site" evidence="1">
    <location>
        <position position="54"/>
    </location>
    <ligand>
        <name>Zn(2+)</name>
        <dbReference type="ChEBI" id="CHEBI:29105"/>
        <note>catalytic</note>
    </ligand>
</feature>
<feature type="binding site" evidence="1">
    <location>
        <position position="65"/>
    </location>
    <ligand>
        <name>Zn(2+)</name>
        <dbReference type="ChEBI" id="CHEBI:29105"/>
        <note>catalytic</note>
    </ligand>
</feature>
<feature type="binding site" evidence="1">
    <location>
        <position position="67"/>
    </location>
    <ligand>
        <name>Zn(2+)</name>
        <dbReference type="ChEBI" id="CHEBI:29105"/>
        <note>catalytic</note>
    </ligand>
</feature>
<feature type="binding site" evidence="1">
    <location>
        <position position="70"/>
    </location>
    <ligand>
        <name>GTP</name>
        <dbReference type="ChEBI" id="CHEBI:37565"/>
    </ligand>
</feature>
<feature type="binding site" evidence="1">
    <location>
        <begin position="92"/>
        <end position="94"/>
    </location>
    <ligand>
        <name>GTP</name>
        <dbReference type="ChEBI" id="CHEBI:37565"/>
    </ligand>
</feature>
<feature type="binding site" evidence="1">
    <location>
        <position position="114"/>
    </location>
    <ligand>
        <name>GTP</name>
        <dbReference type="ChEBI" id="CHEBI:37565"/>
    </ligand>
</feature>
<feature type="binding site" evidence="1">
    <location>
        <position position="149"/>
    </location>
    <ligand>
        <name>GTP</name>
        <dbReference type="ChEBI" id="CHEBI:37565"/>
    </ligand>
</feature>
<feature type="binding site" evidence="1">
    <location>
        <position position="154"/>
    </location>
    <ligand>
        <name>GTP</name>
        <dbReference type="ChEBI" id="CHEBI:37565"/>
    </ligand>
</feature>
<sequence length="196" mass="21836">MQLKRVAEAKLPTPWGDFLMVGFEELATGHDHVALVYGDISGHTPVLARVHSECLTGDALFSLRCDCGFQLEAALTQIAEEGRGILLYHRQEGRNIGLLNKIRAYALQDQGYDTVEANHQLGFAADERDFTLCADMFKLLGVNEVRLLTNNPKKVEILTEAGINIVERVPLIVGRNPNNEHYLDTKAEKMGHLLNK</sequence>
<dbReference type="EC" id="3.5.4.25" evidence="1"/>
<dbReference type="EMBL" id="CP001164">
    <property type="protein sequence ID" value="ACI36415.1"/>
    <property type="molecule type" value="Genomic_DNA"/>
</dbReference>
<dbReference type="RefSeq" id="WP_001176295.1">
    <property type="nucleotide sequence ID" value="NC_011353.1"/>
</dbReference>
<dbReference type="SMR" id="B5YZQ8"/>
<dbReference type="GeneID" id="86946614"/>
<dbReference type="KEGG" id="ecf:ECH74115_1911"/>
<dbReference type="HOGENOM" id="CLU_020273_2_1_6"/>
<dbReference type="UniPathway" id="UPA00275">
    <property type="reaction ID" value="UER00400"/>
</dbReference>
<dbReference type="GO" id="GO:0005829">
    <property type="term" value="C:cytosol"/>
    <property type="evidence" value="ECO:0007669"/>
    <property type="project" value="TreeGrafter"/>
</dbReference>
<dbReference type="GO" id="GO:0005525">
    <property type="term" value="F:GTP binding"/>
    <property type="evidence" value="ECO:0007669"/>
    <property type="project" value="UniProtKB-KW"/>
</dbReference>
<dbReference type="GO" id="GO:0003935">
    <property type="term" value="F:GTP cyclohydrolase II activity"/>
    <property type="evidence" value="ECO:0007669"/>
    <property type="project" value="UniProtKB-UniRule"/>
</dbReference>
<dbReference type="GO" id="GO:0008270">
    <property type="term" value="F:zinc ion binding"/>
    <property type="evidence" value="ECO:0007669"/>
    <property type="project" value="UniProtKB-UniRule"/>
</dbReference>
<dbReference type="GO" id="GO:0009231">
    <property type="term" value="P:riboflavin biosynthetic process"/>
    <property type="evidence" value="ECO:0007669"/>
    <property type="project" value="UniProtKB-UniRule"/>
</dbReference>
<dbReference type="CDD" id="cd00641">
    <property type="entry name" value="GTP_cyclohydro2"/>
    <property type="match status" value="1"/>
</dbReference>
<dbReference type="FunFam" id="3.40.50.10990:FF:000002">
    <property type="entry name" value="GTP cyclohydrolase-2"/>
    <property type="match status" value="1"/>
</dbReference>
<dbReference type="Gene3D" id="3.40.50.10990">
    <property type="entry name" value="GTP cyclohydrolase II"/>
    <property type="match status" value="1"/>
</dbReference>
<dbReference type="HAMAP" id="MF_00179">
    <property type="entry name" value="RibA"/>
    <property type="match status" value="1"/>
</dbReference>
<dbReference type="InterPro" id="IPR032677">
    <property type="entry name" value="GTP_cyclohydro_II"/>
</dbReference>
<dbReference type="InterPro" id="IPR000926">
    <property type="entry name" value="RibA"/>
</dbReference>
<dbReference type="InterPro" id="IPR036144">
    <property type="entry name" value="RibA-like_sf"/>
</dbReference>
<dbReference type="NCBIfam" id="NF001591">
    <property type="entry name" value="PRK00393.1"/>
    <property type="match status" value="1"/>
</dbReference>
<dbReference type="NCBIfam" id="TIGR00505">
    <property type="entry name" value="ribA"/>
    <property type="match status" value="1"/>
</dbReference>
<dbReference type="PANTHER" id="PTHR21327:SF18">
    <property type="entry name" value="3,4-DIHYDROXY-2-BUTANONE 4-PHOSPHATE SYNTHASE"/>
    <property type="match status" value="1"/>
</dbReference>
<dbReference type="PANTHER" id="PTHR21327">
    <property type="entry name" value="GTP CYCLOHYDROLASE II-RELATED"/>
    <property type="match status" value="1"/>
</dbReference>
<dbReference type="Pfam" id="PF00925">
    <property type="entry name" value="GTP_cyclohydro2"/>
    <property type="match status" value="1"/>
</dbReference>
<dbReference type="SUPFAM" id="SSF142695">
    <property type="entry name" value="RibA-like"/>
    <property type="match status" value="1"/>
</dbReference>
<accession>B5YZQ8</accession>
<comment type="function">
    <text evidence="1">Catalyzes the conversion of GTP to 2,5-diamino-6-ribosylamino-4(3H)-pyrimidinone 5'-phosphate (DARP), formate and pyrophosphate.</text>
</comment>
<comment type="catalytic activity">
    <reaction evidence="1">
        <text>GTP + 4 H2O = 2,5-diamino-6-hydroxy-4-(5-phosphoribosylamino)-pyrimidine + formate + 2 phosphate + 3 H(+)</text>
        <dbReference type="Rhea" id="RHEA:23704"/>
        <dbReference type="ChEBI" id="CHEBI:15377"/>
        <dbReference type="ChEBI" id="CHEBI:15378"/>
        <dbReference type="ChEBI" id="CHEBI:15740"/>
        <dbReference type="ChEBI" id="CHEBI:37565"/>
        <dbReference type="ChEBI" id="CHEBI:43474"/>
        <dbReference type="ChEBI" id="CHEBI:58614"/>
        <dbReference type="EC" id="3.5.4.25"/>
    </reaction>
</comment>
<comment type="cofactor">
    <cofactor evidence="1">
        <name>Zn(2+)</name>
        <dbReference type="ChEBI" id="CHEBI:29105"/>
    </cofactor>
    <text evidence="1">Binds 1 zinc ion per subunit.</text>
</comment>
<comment type="pathway">
    <text evidence="1">Cofactor biosynthesis; riboflavin biosynthesis; 5-amino-6-(D-ribitylamino)uracil from GTP: step 1/4.</text>
</comment>
<comment type="subunit">
    <text evidence="1">Homodimer.</text>
</comment>
<comment type="similarity">
    <text evidence="1">Belongs to the GTP cyclohydrolase II family.</text>
</comment>
<protein>
    <recommendedName>
        <fullName evidence="1">GTP cyclohydrolase-2</fullName>
        <ecNumber evidence="1">3.5.4.25</ecNumber>
    </recommendedName>
    <alternativeName>
        <fullName evidence="1">GTP cyclohydrolase II</fullName>
    </alternativeName>
</protein>
<organism>
    <name type="scientific">Escherichia coli O157:H7 (strain EC4115 / EHEC)</name>
    <dbReference type="NCBI Taxonomy" id="444450"/>
    <lineage>
        <taxon>Bacteria</taxon>
        <taxon>Pseudomonadati</taxon>
        <taxon>Pseudomonadota</taxon>
        <taxon>Gammaproteobacteria</taxon>
        <taxon>Enterobacterales</taxon>
        <taxon>Enterobacteriaceae</taxon>
        <taxon>Escherichia</taxon>
    </lineage>
</organism>
<evidence type="ECO:0000255" key="1">
    <source>
        <dbReference type="HAMAP-Rule" id="MF_00179"/>
    </source>
</evidence>
<reference key="1">
    <citation type="journal article" date="2011" name="Proc. Natl. Acad. Sci. U.S.A.">
        <title>Genomic anatomy of Escherichia coli O157:H7 outbreaks.</title>
        <authorList>
            <person name="Eppinger M."/>
            <person name="Mammel M.K."/>
            <person name="Leclerc J.E."/>
            <person name="Ravel J."/>
            <person name="Cebula T.A."/>
        </authorList>
    </citation>
    <scope>NUCLEOTIDE SEQUENCE [LARGE SCALE GENOMIC DNA]</scope>
    <source>
        <strain>EC4115 / EHEC</strain>
    </source>
</reference>